<dbReference type="EMBL" id="CP000009">
    <property type="protein sequence ID" value="AAW61567.1"/>
    <property type="molecule type" value="Genomic_DNA"/>
</dbReference>
<dbReference type="SMR" id="Q5FPX9"/>
<dbReference type="STRING" id="290633.GOX1828"/>
<dbReference type="KEGG" id="gox:GOX1828"/>
<dbReference type="eggNOG" id="COG0218">
    <property type="taxonomic scope" value="Bacteria"/>
</dbReference>
<dbReference type="HOGENOM" id="CLU_033732_2_0_5"/>
<dbReference type="Proteomes" id="UP000006375">
    <property type="component" value="Chromosome"/>
</dbReference>
<dbReference type="GO" id="GO:0005829">
    <property type="term" value="C:cytosol"/>
    <property type="evidence" value="ECO:0007669"/>
    <property type="project" value="TreeGrafter"/>
</dbReference>
<dbReference type="GO" id="GO:0005525">
    <property type="term" value="F:GTP binding"/>
    <property type="evidence" value="ECO:0007669"/>
    <property type="project" value="UniProtKB-UniRule"/>
</dbReference>
<dbReference type="GO" id="GO:0046872">
    <property type="term" value="F:metal ion binding"/>
    <property type="evidence" value="ECO:0007669"/>
    <property type="project" value="UniProtKB-KW"/>
</dbReference>
<dbReference type="GO" id="GO:0000917">
    <property type="term" value="P:division septum assembly"/>
    <property type="evidence" value="ECO:0007669"/>
    <property type="project" value="UniProtKB-KW"/>
</dbReference>
<dbReference type="CDD" id="cd01876">
    <property type="entry name" value="YihA_EngB"/>
    <property type="match status" value="1"/>
</dbReference>
<dbReference type="Gene3D" id="3.40.50.300">
    <property type="entry name" value="P-loop containing nucleotide triphosphate hydrolases"/>
    <property type="match status" value="1"/>
</dbReference>
<dbReference type="HAMAP" id="MF_00321">
    <property type="entry name" value="GTPase_EngB"/>
    <property type="match status" value="1"/>
</dbReference>
<dbReference type="InterPro" id="IPR030393">
    <property type="entry name" value="G_ENGB_dom"/>
</dbReference>
<dbReference type="InterPro" id="IPR006073">
    <property type="entry name" value="GTP-bd"/>
</dbReference>
<dbReference type="InterPro" id="IPR019987">
    <property type="entry name" value="GTP-bd_ribosome_bio_YsxC"/>
</dbReference>
<dbReference type="InterPro" id="IPR027417">
    <property type="entry name" value="P-loop_NTPase"/>
</dbReference>
<dbReference type="NCBIfam" id="TIGR03598">
    <property type="entry name" value="GTPase_YsxC"/>
    <property type="match status" value="1"/>
</dbReference>
<dbReference type="PANTHER" id="PTHR11649:SF13">
    <property type="entry name" value="ENGB-TYPE G DOMAIN-CONTAINING PROTEIN"/>
    <property type="match status" value="1"/>
</dbReference>
<dbReference type="PANTHER" id="PTHR11649">
    <property type="entry name" value="MSS1/TRME-RELATED GTP-BINDING PROTEIN"/>
    <property type="match status" value="1"/>
</dbReference>
<dbReference type="Pfam" id="PF01926">
    <property type="entry name" value="MMR_HSR1"/>
    <property type="match status" value="1"/>
</dbReference>
<dbReference type="SUPFAM" id="SSF52540">
    <property type="entry name" value="P-loop containing nucleoside triphosphate hydrolases"/>
    <property type="match status" value="1"/>
</dbReference>
<dbReference type="PROSITE" id="PS51706">
    <property type="entry name" value="G_ENGB"/>
    <property type="match status" value="1"/>
</dbReference>
<name>ENGB_GLUOX</name>
<organism>
    <name type="scientific">Gluconobacter oxydans (strain 621H)</name>
    <name type="common">Gluconobacter suboxydans</name>
    <dbReference type="NCBI Taxonomy" id="290633"/>
    <lineage>
        <taxon>Bacteria</taxon>
        <taxon>Pseudomonadati</taxon>
        <taxon>Pseudomonadota</taxon>
        <taxon>Alphaproteobacteria</taxon>
        <taxon>Acetobacterales</taxon>
        <taxon>Acetobacteraceae</taxon>
        <taxon>Gluconobacter</taxon>
    </lineage>
</organism>
<sequence>MMKEIPGPPTEAQIEDGRLLFAGECEFFFGSQKIDQLPPVGRPEVAFAGRSNVGKSSIINALTGRRALARASSEPGRTKQLNFFNLADRLSLVDMPGYGFAKAAKSVKEDWQDMMFAYLRGRTTLERVILLLDARIELKASDKDVMELLDRAAVVFQIVLTKCDQVKPKALAAKIAEVEALALKHAAAYPRIIATSSETGFGIEDLRAEIARFAVPLQTSGEGQSGS</sequence>
<protein>
    <recommendedName>
        <fullName evidence="1">Probable GTP-binding protein EngB</fullName>
    </recommendedName>
</protein>
<gene>
    <name evidence="1" type="primary">engB</name>
    <name type="ordered locus">GOX1828</name>
</gene>
<evidence type="ECO:0000255" key="1">
    <source>
        <dbReference type="HAMAP-Rule" id="MF_00321"/>
    </source>
</evidence>
<feature type="chain" id="PRO_0000266869" description="Probable GTP-binding protein EngB">
    <location>
        <begin position="1"/>
        <end position="227"/>
    </location>
</feature>
<feature type="domain" description="EngB-type G" evidence="1">
    <location>
        <begin position="41"/>
        <end position="216"/>
    </location>
</feature>
<feature type="binding site" evidence="1">
    <location>
        <begin position="49"/>
        <end position="56"/>
    </location>
    <ligand>
        <name>GTP</name>
        <dbReference type="ChEBI" id="CHEBI:37565"/>
    </ligand>
</feature>
<feature type="binding site" evidence="1">
    <location>
        <position position="56"/>
    </location>
    <ligand>
        <name>Mg(2+)</name>
        <dbReference type="ChEBI" id="CHEBI:18420"/>
    </ligand>
</feature>
<feature type="binding site" evidence="1">
    <location>
        <begin position="76"/>
        <end position="80"/>
    </location>
    <ligand>
        <name>GTP</name>
        <dbReference type="ChEBI" id="CHEBI:37565"/>
    </ligand>
</feature>
<feature type="binding site" evidence="1">
    <location>
        <position position="78"/>
    </location>
    <ligand>
        <name>Mg(2+)</name>
        <dbReference type="ChEBI" id="CHEBI:18420"/>
    </ligand>
</feature>
<feature type="binding site" evidence="1">
    <location>
        <begin position="94"/>
        <end position="97"/>
    </location>
    <ligand>
        <name>GTP</name>
        <dbReference type="ChEBI" id="CHEBI:37565"/>
    </ligand>
</feature>
<feature type="binding site" evidence="1">
    <location>
        <begin position="161"/>
        <end position="164"/>
    </location>
    <ligand>
        <name>GTP</name>
        <dbReference type="ChEBI" id="CHEBI:37565"/>
    </ligand>
</feature>
<feature type="binding site" evidence="1">
    <location>
        <begin position="195"/>
        <end position="197"/>
    </location>
    <ligand>
        <name>GTP</name>
        <dbReference type="ChEBI" id="CHEBI:37565"/>
    </ligand>
</feature>
<reference key="1">
    <citation type="journal article" date="2005" name="Nat. Biotechnol.">
        <title>Complete genome sequence of the acetic acid bacterium Gluconobacter oxydans.</title>
        <authorList>
            <person name="Prust C."/>
            <person name="Hoffmeister M."/>
            <person name="Liesegang H."/>
            <person name="Wiezer A."/>
            <person name="Fricke W.F."/>
            <person name="Ehrenreich A."/>
            <person name="Gottschalk G."/>
            <person name="Deppenmeier U."/>
        </authorList>
    </citation>
    <scope>NUCLEOTIDE SEQUENCE [LARGE SCALE GENOMIC DNA]</scope>
    <source>
        <strain>621H</strain>
    </source>
</reference>
<accession>Q5FPX9</accession>
<comment type="function">
    <text evidence="1">Necessary for normal cell division and for the maintenance of normal septation.</text>
</comment>
<comment type="cofactor">
    <cofactor evidence="1">
        <name>Mg(2+)</name>
        <dbReference type="ChEBI" id="CHEBI:18420"/>
    </cofactor>
</comment>
<comment type="similarity">
    <text evidence="1">Belongs to the TRAFAC class TrmE-Era-EngA-EngB-Septin-like GTPase superfamily. EngB GTPase family.</text>
</comment>
<keyword id="KW-0131">Cell cycle</keyword>
<keyword id="KW-0132">Cell division</keyword>
<keyword id="KW-0342">GTP-binding</keyword>
<keyword id="KW-0460">Magnesium</keyword>
<keyword id="KW-0479">Metal-binding</keyword>
<keyword id="KW-0547">Nucleotide-binding</keyword>
<keyword id="KW-1185">Reference proteome</keyword>
<keyword id="KW-0717">Septation</keyword>
<proteinExistence type="inferred from homology"/>